<reference key="1">
    <citation type="submission" date="2006-12" db="EMBL/GenBank/DDBJ databases">
        <title>Complete sequence of Chlorobium phaeobacteroides DSM 266.</title>
        <authorList>
            <consortium name="US DOE Joint Genome Institute"/>
            <person name="Copeland A."/>
            <person name="Lucas S."/>
            <person name="Lapidus A."/>
            <person name="Barry K."/>
            <person name="Detter J.C."/>
            <person name="Glavina del Rio T."/>
            <person name="Hammon N."/>
            <person name="Israni S."/>
            <person name="Pitluck S."/>
            <person name="Goltsman E."/>
            <person name="Schmutz J."/>
            <person name="Larimer F."/>
            <person name="Land M."/>
            <person name="Hauser L."/>
            <person name="Mikhailova N."/>
            <person name="Li T."/>
            <person name="Overmann J."/>
            <person name="Bryant D.A."/>
            <person name="Richardson P."/>
        </authorList>
    </citation>
    <scope>NUCLEOTIDE SEQUENCE [LARGE SCALE GENOMIC DNA]</scope>
    <source>
        <strain>DSM 266 / SMG 266 / 2430</strain>
    </source>
</reference>
<accession>A1BJI4</accession>
<feature type="chain" id="PRO_1000005401" description="NAD kinase">
    <location>
        <begin position="1"/>
        <end position="285"/>
    </location>
</feature>
<feature type="active site" description="Proton acceptor" evidence="1">
    <location>
        <position position="66"/>
    </location>
</feature>
<feature type="binding site" evidence="1">
    <location>
        <begin position="66"/>
        <end position="67"/>
    </location>
    <ligand>
        <name>NAD(+)</name>
        <dbReference type="ChEBI" id="CHEBI:57540"/>
    </ligand>
</feature>
<feature type="binding site" evidence="1">
    <location>
        <begin position="137"/>
        <end position="138"/>
    </location>
    <ligand>
        <name>NAD(+)</name>
        <dbReference type="ChEBI" id="CHEBI:57540"/>
    </ligand>
</feature>
<feature type="binding site" evidence="1">
    <location>
        <position position="148"/>
    </location>
    <ligand>
        <name>NAD(+)</name>
        <dbReference type="ChEBI" id="CHEBI:57540"/>
    </ligand>
</feature>
<feature type="binding site" evidence="1">
    <location>
        <position position="165"/>
    </location>
    <ligand>
        <name>NAD(+)</name>
        <dbReference type="ChEBI" id="CHEBI:57540"/>
    </ligand>
</feature>
<feature type="binding site" evidence="1">
    <location>
        <position position="167"/>
    </location>
    <ligand>
        <name>NAD(+)</name>
        <dbReference type="ChEBI" id="CHEBI:57540"/>
    </ligand>
</feature>
<feature type="binding site" evidence="1">
    <location>
        <begin position="178"/>
        <end position="183"/>
    </location>
    <ligand>
        <name>NAD(+)</name>
        <dbReference type="ChEBI" id="CHEBI:57540"/>
    </ligand>
</feature>
<sequence>MKFGIVINTSRERAITLARELMAWLTEHGQDYVFDTESALRLQTARTAPIEELNKQCDAFVSLGGDGTLLFTSHYSVTKPVIGINVGYLGFLTEFSPDEMVPAIEKVLSGNYSIHNRSQLEATFRTDGKIEQLRALNDVVIEKGTYPRIPTFVIKLDGELLGSYRADGIIIATSTGSTAYSMSAGGPIIAPKSSVFVITPICPHMLTVRPIVINDEKIIEVSIDAPDGEFPLNGDGHLRKLLAPQETVTVKKSQQVINLVANENRDYCEILRTKLLWGREHDSTQ</sequence>
<protein>
    <recommendedName>
        <fullName evidence="1">NAD kinase</fullName>
        <ecNumber evidence="1">2.7.1.23</ecNumber>
    </recommendedName>
    <alternativeName>
        <fullName evidence="1">ATP-dependent NAD kinase</fullName>
    </alternativeName>
</protein>
<comment type="function">
    <text evidence="1">Involved in the regulation of the intracellular balance of NAD and NADP, and is a key enzyme in the biosynthesis of NADP. Catalyzes specifically the phosphorylation on 2'-hydroxyl of the adenosine moiety of NAD to yield NADP.</text>
</comment>
<comment type="catalytic activity">
    <reaction evidence="1">
        <text>NAD(+) + ATP = ADP + NADP(+) + H(+)</text>
        <dbReference type="Rhea" id="RHEA:18629"/>
        <dbReference type="ChEBI" id="CHEBI:15378"/>
        <dbReference type="ChEBI" id="CHEBI:30616"/>
        <dbReference type="ChEBI" id="CHEBI:57540"/>
        <dbReference type="ChEBI" id="CHEBI:58349"/>
        <dbReference type="ChEBI" id="CHEBI:456216"/>
        <dbReference type="EC" id="2.7.1.23"/>
    </reaction>
</comment>
<comment type="cofactor">
    <cofactor evidence="1">
        <name>a divalent metal cation</name>
        <dbReference type="ChEBI" id="CHEBI:60240"/>
    </cofactor>
</comment>
<comment type="subcellular location">
    <subcellularLocation>
        <location evidence="1">Cytoplasm</location>
    </subcellularLocation>
</comment>
<comment type="similarity">
    <text evidence="1">Belongs to the NAD kinase family.</text>
</comment>
<dbReference type="EC" id="2.7.1.23" evidence="1"/>
<dbReference type="EMBL" id="CP000492">
    <property type="protein sequence ID" value="ABL66561.1"/>
    <property type="molecule type" value="Genomic_DNA"/>
</dbReference>
<dbReference type="RefSeq" id="WP_011746336.1">
    <property type="nucleotide sequence ID" value="NC_008639.1"/>
</dbReference>
<dbReference type="SMR" id="A1BJI4"/>
<dbReference type="STRING" id="290317.Cpha266_2573"/>
<dbReference type="KEGG" id="cph:Cpha266_2573"/>
<dbReference type="eggNOG" id="COG0061">
    <property type="taxonomic scope" value="Bacteria"/>
</dbReference>
<dbReference type="HOGENOM" id="CLU_008831_0_1_10"/>
<dbReference type="OrthoDB" id="9774737at2"/>
<dbReference type="Proteomes" id="UP000008701">
    <property type="component" value="Chromosome"/>
</dbReference>
<dbReference type="GO" id="GO:0005737">
    <property type="term" value="C:cytoplasm"/>
    <property type="evidence" value="ECO:0007669"/>
    <property type="project" value="UniProtKB-SubCell"/>
</dbReference>
<dbReference type="GO" id="GO:0005524">
    <property type="term" value="F:ATP binding"/>
    <property type="evidence" value="ECO:0007669"/>
    <property type="project" value="UniProtKB-KW"/>
</dbReference>
<dbReference type="GO" id="GO:0046872">
    <property type="term" value="F:metal ion binding"/>
    <property type="evidence" value="ECO:0007669"/>
    <property type="project" value="UniProtKB-UniRule"/>
</dbReference>
<dbReference type="GO" id="GO:0051287">
    <property type="term" value="F:NAD binding"/>
    <property type="evidence" value="ECO:0007669"/>
    <property type="project" value="UniProtKB-ARBA"/>
</dbReference>
<dbReference type="GO" id="GO:0003951">
    <property type="term" value="F:NAD+ kinase activity"/>
    <property type="evidence" value="ECO:0007669"/>
    <property type="project" value="UniProtKB-UniRule"/>
</dbReference>
<dbReference type="GO" id="GO:0019674">
    <property type="term" value="P:NAD metabolic process"/>
    <property type="evidence" value="ECO:0007669"/>
    <property type="project" value="InterPro"/>
</dbReference>
<dbReference type="GO" id="GO:0006741">
    <property type="term" value="P:NADP biosynthetic process"/>
    <property type="evidence" value="ECO:0007669"/>
    <property type="project" value="UniProtKB-UniRule"/>
</dbReference>
<dbReference type="Gene3D" id="3.40.50.10330">
    <property type="entry name" value="Probable inorganic polyphosphate/atp-NAD kinase, domain 1"/>
    <property type="match status" value="1"/>
</dbReference>
<dbReference type="Gene3D" id="2.60.200.30">
    <property type="entry name" value="Probable inorganic polyphosphate/atp-NAD kinase, domain 2"/>
    <property type="match status" value="1"/>
</dbReference>
<dbReference type="HAMAP" id="MF_00361">
    <property type="entry name" value="NAD_kinase"/>
    <property type="match status" value="1"/>
</dbReference>
<dbReference type="InterPro" id="IPR017438">
    <property type="entry name" value="ATP-NAD_kinase_N"/>
</dbReference>
<dbReference type="InterPro" id="IPR017437">
    <property type="entry name" value="ATP-NAD_kinase_PpnK-typ_C"/>
</dbReference>
<dbReference type="InterPro" id="IPR016064">
    <property type="entry name" value="NAD/diacylglycerol_kinase_sf"/>
</dbReference>
<dbReference type="InterPro" id="IPR002504">
    <property type="entry name" value="NADK"/>
</dbReference>
<dbReference type="PANTHER" id="PTHR20275">
    <property type="entry name" value="NAD KINASE"/>
    <property type="match status" value="1"/>
</dbReference>
<dbReference type="PANTHER" id="PTHR20275:SF0">
    <property type="entry name" value="NAD KINASE"/>
    <property type="match status" value="1"/>
</dbReference>
<dbReference type="Pfam" id="PF01513">
    <property type="entry name" value="NAD_kinase"/>
    <property type="match status" value="1"/>
</dbReference>
<dbReference type="Pfam" id="PF20143">
    <property type="entry name" value="NAD_kinase_C"/>
    <property type="match status" value="1"/>
</dbReference>
<dbReference type="SUPFAM" id="SSF111331">
    <property type="entry name" value="NAD kinase/diacylglycerol kinase-like"/>
    <property type="match status" value="1"/>
</dbReference>
<organism>
    <name type="scientific">Chlorobium phaeobacteroides (strain DSM 266 / SMG 266 / 2430)</name>
    <dbReference type="NCBI Taxonomy" id="290317"/>
    <lineage>
        <taxon>Bacteria</taxon>
        <taxon>Pseudomonadati</taxon>
        <taxon>Chlorobiota</taxon>
        <taxon>Chlorobiia</taxon>
        <taxon>Chlorobiales</taxon>
        <taxon>Chlorobiaceae</taxon>
        <taxon>Chlorobium/Pelodictyon group</taxon>
        <taxon>Chlorobium</taxon>
    </lineage>
</organism>
<gene>
    <name evidence="1" type="primary">nadK</name>
    <name type="ordered locus">Cpha266_2573</name>
</gene>
<name>NADK_CHLPD</name>
<proteinExistence type="inferred from homology"/>
<evidence type="ECO:0000255" key="1">
    <source>
        <dbReference type="HAMAP-Rule" id="MF_00361"/>
    </source>
</evidence>
<keyword id="KW-0067">ATP-binding</keyword>
<keyword id="KW-0963">Cytoplasm</keyword>
<keyword id="KW-0418">Kinase</keyword>
<keyword id="KW-0520">NAD</keyword>
<keyword id="KW-0521">NADP</keyword>
<keyword id="KW-0547">Nucleotide-binding</keyword>
<keyword id="KW-1185">Reference proteome</keyword>
<keyword id="KW-0808">Transferase</keyword>